<feature type="chain" id="PRO_0000098571" description="Isoleucine--tRNA ligase">
    <location>
        <begin position="1"/>
        <end position="1056"/>
    </location>
</feature>
<feature type="region of interest" description="Disordered" evidence="2">
    <location>
        <begin position="1"/>
        <end position="26"/>
    </location>
</feature>
<feature type="short sequence motif" description="'HIGH' region">
    <location>
        <begin position="63"/>
        <end position="73"/>
    </location>
</feature>
<feature type="short sequence motif" description="'KMSKS' region">
    <location>
        <begin position="632"/>
        <end position="636"/>
    </location>
</feature>
<feature type="compositionally biased region" description="Polar residues" evidence="2">
    <location>
        <begin position="1"/>
        <end position="13"/>
    </location>
</feature>
<feature type="binding site" evidence="1">
    <location>
        <position position="635"/>
    </location>
    <ligand>
        <name>ATP</name>
        <dbReference type="ChEBI" id="CHEBI:30616"/>
    </ligand>
</feature>
<organism>
    <name type="scientific">Tropheryma whipplei (strain Twist)</name>
    <name type="common">Whipple's bacillus</name>
    <dbReference type="NCBI Taxonomy" id="203267"/>
    <lineage>
        <taxon>Bacteria</taxon>
        <taxon>Bacillati</taxon>
        <taxon>Actinomycetota</taxon>
        <taxon>Actinomycetes</taxon>
        <taxon>Micrococcales</taxon>
        <taxon>Tropherymataceae</taxon>
        <taxon>Tropheryma</taxon>
    </lineage>
</organism>
<name>SYI_TROWT</name>
<keyword id="KW-0030">Aminoacyl-tRNA synthetase</keyword>
<keyword id="KW-0067">ATP-binding</keyword>
<keyword id="KW-0963">Cytoplasm</keyword>
<keyword id="KW-0436">Ligase</keyword>
<keyword id="KW-0479">Metal-binding</keyword>
<keyword id="KW-0547">Nucleotide-binding</keyword>
<keyword id="KW-0648">Protein biosynthesis</keyword>
<keyword id="KW-1185">Reference proteome</keyword>
<keyword id="KW-0862">Zinc</keyword>
<accession>Q83G52</accession>
<proteinExistence type="inferred from homology"/>
<protein>
    <recommendedName>
        <fullName evidence="1">Isoleucine--tRNA ligase</fullName>
        <ecNumber evidence="1">6.1.1.5</ecNumber>
    </recommendedName>
    <alternativeName>
        <fullName evidence="1">Isoleucyl-tRNA synthetase</fullName>
        <shortName evidence="1">IleRS</shortName>
    </alternativeName>
</protein>
<gene>
    <name evidence="1" type="primary">ileS</name>
    <name type="ordered locus">TWT_477</name>
</gene>
<reference key="1">
    <citation type="journal article" date="2003" name="Genome Res.">
        <title>Tropheryma whipplei twist: a human pathogenic Actinobacteria with a reduced genome.</title>
        <authorList>
            <person name="Raoult D."/>
            <person name="Ogata H."/>
            <person name="Audic S."/>
            <person name="Robert C."/>
            <person name="Suhre K."/>
            <person name="Drancourt M."/>
            <person name="Claverie J.-M."/>
        </authorList>
    </citation>
    <scope>NUCLEOTIDE SEQUENCE [LARGE SCALE GENOMIC DNA]</scope>
    <source>
        <strain>Twist</strain>
    </source>
</reference>
<sequence length="1056" mass="119751">MCDQGEVSSQNSSDYKEQRPTPRPNLPKIEESVLAFWSSDKTFEASLEQRQHGKRWVFYDGPPFANGLPHFGHLLTGYIKDAIPRYQTMRGQYVPRVFGWDTHGLPAELEAMKRLGITEKSQIESMGIASFNEAARKSVLTYVDQWEEYVNRQARWVDFKNGYKTLDLDYMESVLWAFKTLYKKGVIYEGYKVLPYCWNDQTPLSNHELRMDDEVYKQRLDDSLTVTFPLIGQKAKTCGLDGVAALAWTTTPWTLPSNMALIVSPNVEYVVVSSARQNSNSDFLLCKSSLDSYAECLGYESGQDARASIRRTLLGKEIEGIHYKPLFDYYADLHNAFTILSDNYVDVTEGTGIVHASPAHGEDDKRVCDAFGVPTVVSINDAACFTDVISNYAGMHIFDANAVIRSDLSRDGRILRHESYKHSYPHCWRCRSPLIYKAVTSWFFRITDSVNRMLELNQQINWVPKSVKNGQFAKWLSSAKDWSISRTRYWGTPIPVWKSDNPEYPRIDCYGSLKELEDDFGIKLTDLHRPEIDRLTRPNPDDPTGASTMRRVPDVLDVWFDAASMPFAQLHYPFENIERFEANKSADFIVEYAGQIRGWFYLLHAMSTALFDGVAFKNAICHGIVLGDDGQKASKSLRNYPDVYDVFENEGSDAVRWYLISSSILRGGSLIVSRKKIQDAIRQYITPLWSSWYFFHIYSEAARPGGYKARFSVDSQDILDRYILSKTGLLVEDVTRFMDSFDMASAALQLRDFVAVLTNWYIRRSRDRFWDGSDTGAFDTLYTVLETLCRLGAVFVPMVSEHVYKCLTNSRSVHLSDWPDVATFPNETGLVETMDRVRKICSTGLSLRKRLGIKARQPLSSAHIRVAQVGSLAQYKDIISGELNVKTVSIEEGSCTQRMLKILPRVAGPRLAGDVQTVIAAARRGDWTDHDGHVTAGGIPLLENEYQLVAGAQDSKNSQPLPFGGSVTLDTRIDETLRSEGVARDTVRQIQIARKEKDLNITDRISLEVCVPDEQVKNNLLAFSELICKETLCDRLDILVKKGIDGITVSLEKFRQ</sequence>
<comment type="function">
    <text evidence="1">Catalyzes the attachment of isoleucine to tRNA(Ile). As IleRS can inadvertently accommodate and process structurally similar amino acids such as valine, to avoid such errors it has two additional distinct tRNA(Ile)-dependent editing activities. One activity is designated as 'pretransfer' editing and involves the hydrolysis of activated Val-AMP. The other activity is designated 'posttransfer' editing and involves deacylation of mischarged Val-tRNA(Ile).</text>
</comment>
<comment type="catalytic activity">
    <reaction evidence="1">
        <text>tRNA(Ile) + L-isoleucine + ATP = L-isoleucyl-tRNA(Ile) + AMP + diphosphate</text>
        <dbReference type="Rhea" id="RHEA:11060"/>
        <dbReference type="Rhea" id="RHEA-COMP:9666"/>
        <dbReference type="Rhea" id="RHEA-COMP:9695"/>
        <dbReference type="ChEBI" id="CHEBI:30616"/>
        <dbReference type="ChEBI" id="CHEBI:33019"/>
        <dbReference type="ChEBI" id="CHEBI:58045"/>
        <dbReference type="ChEBI" id="CHEBI:78442"/>
        <dbReference type="ChEBI" id="CHEBI:78528"/>
        <dbReference type="ChEBI" id="CHEBI:456215"/>
        <dbReference type="EC" id="6.1.1.5"/>
    </reaction>
</comment>
<comment type="cofactor">
    <cofactor evidence="1">
        <name>Zn(2+)</name>
        <dbReference type="ChEBI" id="CHEBI:29105"/>
    </cofactor>
</comment>
<comment type="subunit">
    <text evidence="1">Monomer.</text>
</comment>
<comment type="subcellular location">
    <subcellularLocation>
        <location evidence="1">Cytoplasm</location>
    </subcellularLocation>
</comment>
<comment type="domain">
    <text evidence="1">IleRS has two distinct active sites: one for aminoacylation and one for editing. The misactivated valine is translocated from the active site to the editing site, which sterically excludes the correctly activated isoleucine. The single editing site contains two valyl binding pockets, one specific for each substrate (Val-AMP or Val-tRNA(Ile)).</text>
</comment>
<comment type="similarity">
    <text evidence="1">Belongs to the class-I aminoacyl-tRNA synthetase family. IleS type 2 subfamily.</text>
</comment>
<comment type="sequence caution" evidence="3">
    <conflict type="erroneous initiation">
        <sequence resource="EMBL-CDS" id="AAO44574"/>
    </conflict>
</comment>
<evidence type="ECO:0000255" key="1">
    <source>
        <dbReference type="HAMAP-Rule" id="MF_02003"/>
    </source>
</evidence>
<evidence type="ECO:0000256" key="2">
    <source>
        <dbReference type="SAM" id="MobiDB-lite"/>
    </source>
</evidence>
<evidence type="ECO:0000305" key="3"/>
<dbReference type="EC" id="6.1.1.5" evidence="1"/>
<dbReference type="EMBL" id="AE014184">
    <property type="protein sequence ID" value="AAO44574.1"/>
    <property type="status" value="ALT_INIT"/>
    <property type="molecule type" value="Genomic_DNA"/>
</dbReference>
<dbReference type="RefSeq" id="WP_011096241.1">
    <property type="nucleotide sequence ID" value="NC_004572.3"/>
</dbReference>
<dbReference type="SMR" id="Q83G52"/>
<dbReference type="STRING" id="203267.TWT_477"/>
<dbReference type="GeneID" id="67388063"/>
<dbReference type="KEGG" id="twh:TWT_477"/>
<dbReference type="eggNOG" id="COG0060">
    <property type="taxonomic scope" value="Bacteria"/>
</dbReference>
<dbReference type="HOGENOM" id="CLU_001493_1_1_11"/>
<dbReference type="OrthoDB" id="9810365at2"/>
<dbReference type="Proteomes" id="UP000002200">
    <property type="component" value="Chromosome"/>
</dbReference>
<dbReference type="GO" id="GO:0005737">
    <property type="term" value="C:cytoplasm"/>
    <property type="evidence" value="ECO:0007669"/>
    <property type="project" value="UniProtKB-SubCell"/>
</dbReference>
<dbReference type="GO" id="GO:0002161">
    <property type="term" value="F:aminoacyl-tRNA deacylase activity"/>
    <property type="evidence" value="ECO:0007669"/>
    <property type="project" value="InterPro"/>
</dbReference>
<dbReference type="GO" id="GO:0005524">
    <property type="term" value="F:ATP binding"/>
    <property type="evidence" value="ECO:0007669"/>
    <property type="project" value="UniProtKB-UniRule"/>
</dbReference>
<dbReference type="GO" id="GO:0004822">
    <property type="term" value="F:isoleucine-tRNA ligase activity"/>
    <property type="evidence" value="ECO:0007669"/>
    <property type="project" value="UniProtKB-UniRule"/>
</dbReference>
<dbReference type="GO" id="GO:0000049">
    <property type="term" value="F:tRNA binding"/>
    <property type="evidence" value="ECO:0007669"/>
    <property type="project" value="InterPro"/>
</dbReference>
<dbReference type="GO" id="GO:0008270">
    <property type="term" value="F:zinc ion binding"/>
    <property type="evidence" value="ECO:0007669"/>
    <property type="project" value="UniProtKB-UniRule"/>
</dbReference>
<dbReference type="GO" id="GO:0006428">
    <property type="term" value="P:isoleucyl-tRNA aminoacylation"/>
    <property type="evidence" value="ECO:0007669"/>
    <property type="project" value="UniProtKB-UniRule"/>
</dbReference>
<dbReference type="CDD" id="cd07961">
    <property type="entry name" value="Anticodon_Ia_Ile_ABEc"/>
    <property type="match status" value="1"/>
</dbReference>
<dbReference type="FunFam" id="3.40.50.620:FF:000063">
    <property type="entry name" value="Isoleucine--tRNA ligase"/>
    <property type="match status" value="1"/>
</dbReference>
<dbReference type="FunFam" id="3.40.50.620:FF:000075">
    <property type="entry name" value="Isoleucine--tRNA ligase"/>
    <property type="match status" value="1"/>
</dbReference>
<dbReference type="Gene3D" id="3.40.50.620">
    <property type="entry name" value="HUPs"/>
    <property type="match status" value="2"/>
</dbReference>
<dbReference type="Gene3D" id="1.10.730.10">
    <property type="entry name" value="Isoleucyl-tRNA Synthetase, Domain 1"/>
    <property type="match status" value="1"/>
</dbReference>
<dbReference type="HAMAP" id="MF_02003">
    <property type="entry name" value="Ile_tRNA_synth_type2"/>
    <property type="match status" value="1"/>
</dbReference>
<dbReference type="InterPro" id="IPR002300">
    <property type="entry name" value="aa-tRNA-synth_Ia"/>
</dbReference>
<dbReference type="InterPro" id="IPR033709">
    <property type="entry name" value="Anticodon_Ile_ABEc"/>
</dbReference>
<dbReference type="InterPro" id="IPR002301">
    <property type="entry name" value="Ile-tRNA-ligase"/>
</dbReference>
<dbReference type="InterPro" id="IPR023586">
    <property type="entry name" value="Ile-tRNA-ligase_type2"/>
</dbReference>
<dbReference type="InterPro" id="IPR013155">
    <property type="entry name" value="M/V/L/I-tRNA-synth_anticd-bd"/>
</dbReference>
<dbReference type="InterPro" id="IPR014729">
    <property type="entry name" value="Rossmann-like_a/b/a_fold"/>
</dbReference>
<dbReference type="InterPro" id="IPR009080">
    <property type="entry name" value="tRNAsynth_Ia_anticodon-bd"/>
</dbReference>
<dbReference type="InterPro" id="IPR009008">
    <property type="entry name" value="Val/Leu/Ile-tRNA-synth_edit"/>
</dbReference>
<dbReference type="NCBIfam" id="TIGR00392">
    <property type="entry name" value="ileS"/>
    <property type="match status" value="1"/>
</dbReference>
<dbReference type="PANTHER" id="PTHR42780:SF1">
    <property type="entry name" value="ISOLEUCINE--TRNA LIGASE, CYTOPLASMIC"/>
    <property type="match status" value="1"/>
</dbReference>
<dbReference type="PANTHER" id="PTHR42780">
    <property type="entry name" value="SOLEUCYL-TRNA SYNTHETASE"/>
    <property type="match status" value="1"/>
</dbReference>
<dbReference type="Pfam" id="PF08264">
    <property type="entry name" value="Anticodon_1"/>
    <property type="match status" value="1"/>
</dbReference>
<dbReference type="Pfam" id="PF19302">
    <property type="entry name" value="DUF5915"/>
    <property type="match status" value="1"/>
</dbReference>
<dbReference type="Pfam" id="PF00133">
    <property type="entry name" value="tRNA-synt_1"/>
    <property type="match status" value="1"/>
</dbReference>
<dbReference type="PRINTS" id="PR00984">
    <property type="entry name" value="TRNASYNTHILE"/>
</dbReference>
<dbReference type="SUPFAM" id="SSF47323">
    <property type="entry name" value="Anticodon-binding domain of a subclass of class I aminoacyl-tRNA synthetases"/>
    <property type="match status" value="2"/>
</dbReference>
<dbReference type="SUPFAM" id="SSF52374">
    <property type="entry name" value="Nucleotidylyl transferase"/>
    <property type="match status" value="1"/>
</dbReference>
<dbReference type="SUPFAM" id="SSF50677">
    <property type="entry name" value="ValRS/IleRS/LeuRS editing domain"/>
    <property type="match status" value="1"/>
</dbReference>